<evidence type="ECO:0000250" key="1"/>
<evidence type="ECO:0000250" key="2">
    <source>
        <dbReference type="UniProtKB" id="Q99PI4"/>
    </source>
</evidence>
<evidence type="ECO:0000255" key="3"/>
<evidence type="ECO:0000256" key="4">
    <source>
        <dbReference type="SAM" id="MobiDB-lite"/>
    </source>
</evidence>
<evidence type="ECO:0000269" key="5">
    <source>
    </source>
</evidence>
<evidence type="ECO:0000303" key="6">
    <source>
    </source>
</evidence>
<evidence type="ECO:0000305" key="7"/>
<evidence type="ECO:0000312" key="8">
    <source>
        <dbReference type="HGNC" id="HGNC:14451"/>
    </source>
</evidence>
<evidence type="ECO:0007744" key="9">
    <source>
    </source>
</evidence>
<evidence type="ECO:0007744" key="10">
    <source>
    </source>
</evidence>
<proteinExistence type="evidence at protein level"/>
<organism>
    <name type="scientific">Homo sapiens</name>
    <name type="common">Human</name>
    <dbReference type="NCBI Taxonomy" id="9606"/>
    <lineage>
        <taxon>Eukaryota</taxon>
        <taxon>Metazoa</taxon>
        <taxon>Chordata</taxon>
        <taxon>Craniata</taxon>
        <taxon>Vertebrata</taxon>
        <taxon>Euteleostomi</taxon>
        <taxon>Mammalia</taxon>
        <taxon>Eutheria</taxon>
        <taxon>Euarchontoglires</taxon>
        <taxon>Primates</taxon>
        <taxon>Haplorrhini</taxon>
        <taxon>Catarrhini</taxon>
        <taxon>Hominidae</taxon>
        <taxon>Homo</taxon>
    </lineage>
</organism>
<name>LPIN3_HUMAN</name>
<reference key="1">
    <citation type="journal article" date="2001" name="Nature">
        <title>The DNA sequence and comparative analysis of human chromosome 20.</title>
        <authorList>
            <person name="Deloukas P."/>
            <person name="Matthews L.H."/>
            <person name="Ashurst J.L."/>
            <person name="Burton J."/>
            <person name="Gilbert J.G.R."/>
            <person name="Jones M."/>
            <person name="Stavrides G."/>
            <person name="Almeida J.P."/>
            <person name="Babbage A.K."/>
            <person name="Bagguley C.L."/>
            <person name="Bailey J."/>
            <person name="Barlow K.F."/>
            <person name="Bates K.N."/>
            <person name="Beard L.M."/>
            <person name="Beare D.M."/>
            <person name="Beasley O.P."/>
            <person name="Bird C.P."/>
            <person name="Blakey S.E."/>
            <person name="Bridgeman A.M."/>
            <person name="Brown A.J."/>
            <person name="Buck D."/>
            <person name="Burrill W.D."/>
            <person name="Butler A.P."/>
            <person name="Carder C."/>
            <person name="Carter N.P."/>
            <person name="Chapman J.C."/>
            <person name="Clamp M."/>
            <person name="Clark G."/>
            <person name="Clark L.N."/>
            <person name="Clark S.Y."/>
            <person name="Clee C.M."/>
            <person name="Clegg S."/>
            <person name="Cobley V.E."/>
            <person name="Collier R.E."/>
            <person name="Connor R.E."/>
            <person name="Corby N.R."/>
            <person name="Coulson A."/>
            <person name="Coville G.J."/>
            <person name="Deadman R."/>
            <person name="Dhami P.D."/>
            <person name="Dunn M."/>
            <person name="Ellington A.G."/>
            <person name="Frankland J.A."/>
            <person name="Fraser A."/>
            <person name="French L."/>
            <person name="Garner P."/>
            <person name="Grafham D.V."/>
            <person name="Griffiths C."/>
            <person name="Griffiths M.N.D."/>
            <person name="Gwilliam R."/>
            <person name="Hall R.E."/>
            <person name="Hammond S."/>
            <person name="Harley J.L."/>
            <person name="Heath P.D."/>
            <person name="Ho S."/>
            <person name="Holden J.L."/>
            <person name="Howden P.J."/>
            <person name="Huckle E."/>
            <person name="Hunt A.R."/>
            <person name="Hunt S.E."/>
            <person name="Jekosch K."/>
            <person name="Johnson C.M."/>
            <person name="Johnson D."/>
            <person name="Kay M.P."/>
            <person name="Kimberley A.M."/>
            <person name="King A."/>
            <person name="Knights A."/>
            <person name="Laird G.K."/>
            <person name="Lawlor S."/>
            <person name="Lehvaeslaiho M.H."/>
            <person name="Leversha M.A."/>
            <person name="Lloyd C."/>
            <person name="Lloyd D.M."/>
            <person name="Lovell J.D."/>
            <person name="Marsh V.L."/>
            <person name="Martin S.L."/>
            <person name="McConnachie L.J."/>
            <person name="McLay K."/>
            <person name="McMurray A.A."/>
            <person name="Milne S.A."/>
            <person name="Mistry D."/>
            <person name="Moore M.J.F."/>
            <person name="Mullikin J.C."/>
            <person name="Nickerson T."/>
            <person name="Oliver K."/>
            <person name="Parker A."/>
            <person name="Patel R."/>
            <person name="Pearce T.A.V."/>
            <person name="Peck A.I."/>
            <person name="Phillimore B.J.C.T."/>
            <person name="Prathalingam S.R."/>
            <person name="Plumb R.W."/>
            <person name="Ramsay H."/>
            <person name="Rice C.M."/>
            <person name="Ross M.T."/>
            <person name="Scott C.E."/>
            <person name="Sehra H.K."/>
            <person name="Shownkeen R."/>
            <person name="Sims S."/>
            <person name="Skuce C.D."/>
            <person name="Smith M.L."/>
            <person name="Soderlund C."/>
            <person name="Steward C.A."/>
            <person name="Sulston J.E."/>
            <person name="Swann R.M."/>
            <person name="Sycamore N."/>
            <person name="Taylor R."/>
            <person name="Tee L."/>
            <person name="Thomas D.W."/>
            <person name="Thorpe A."/>
            <person name="Tracey A."/>
            <person name="Tromans A.C."/>
            <person name="Vaudin M."/>
            <person name="Wall M."/>
            <person name="Wallis J.M."/>
            <person name="Whitehead S.L."/>
            <person name="Whittaker P."/>
            <person name="Willey D.L."/>
            <person name="Williams L."/>
            <person name="Williams S.A."/>
            <person name="Wilming L."/>
            <person name="Wray P.W."/>
            <person name="Hubbard T."/>
            <person name="Durbin R.M."/>
            <person name="Bentley D.R."/>
            <person name="Beck S."/>
            <person name="Rogers J."/>
        </authorList>
    </citation>
    <scope>NUCLEOTIDE SEQUENCE [LARGE SCALE GENOMIC DNA]</scope>
</reference>
<reference key="2">
    <citation type="journal article" date="2004" name="Genome Res.">
        <title>The status, quality, and expansion of the NIH full-length cDNA project: the Mammalian Gene Collection (MGC).</title>
        <authorList>
            <consortium name="The MGC Project Team"/>
        </authorList>
    </citation>
    <scope>NUCLEOTIDE SEQUENCE [LARGE SCALE MRNA] (ISOFORM 2)</scope>
</reference>
<reference key="3">
    <citation type="journal article" date="2007" name="J. Biol. Chem.">
        <title>Three mammalian lipins act as phosphatidate phosphatases with distinct tissue expression patterns.</title>
        <authorList>
            <person name="Donkor J."/>
            <person name="Sariahmetoglu M."/>
            <person name="Dewald J."/>
            <person name="Brindley D.N."/>
            <person name="Reue K."/>
        </authorList>
    </citation>
    <scope>TISSUE SPECIFICITY</scope>
</reference>
<reference key="4">
    <citation type="journal article" date="2008" name="Proc. Natl. Acad. Sci. U.S.A.">
        <title>A quantitative atlas of mitotic phosphorylation.</title>
        <authorList>
            <person name="Dephoure N."/>
            <person name="Zhou C."/>
            <person name="Villen J."/>
            <person name="Beausoleil S.A."/>
            <person name="Bakalarski C.E."/>
            <person name="Elledge S.J."/>
            <person name="Gygi S.P."/>
        </authorList>
    </citation>
    <scope>PHOSPHORYLATION [LARGE SCALE ANALYSIS] AT THR-159; SER-161 AND SER-162</scope>
    <scope>IDENTIFICATION BY MASS SPECTROMETRY [LARGE SCALE ANALYSIS]</scope>
    <source>
        <tissue>Cervix carcinoma</tissue>
    </source>
</reference>
<reference key="5">
    <citation type="journal article" date="2013" name="J. Proteome Res.">
        <title>Toward a comprehensive characterization of a human cancer cell phosphoproteome.</title>
        <authorList>
            <person name="Zhou H."/>
            <person name="Di Palma S."/>
            <person name="Preisinger C."/>
            <person name="Peng M."/>
            <person name="Polat A.N."/>
            <person name="Heck A.J."/>
            <person name="Mohammed S."/>
        </authorList>
    </citation>
    <scope>PHOSPHORYLATION [LARGE SCALE ANALYSIS] AT SER-463</scope>
    <scope>IDENTIFICATION BY MASS SPECTROMETRY [LARGE SCALE ANALYSIS]</scope>
    <source>
        <tissue>Erythroleukemia</tissue>
    </source>
</reference>
<dbReference type="EC" id="3.1.3.4" evidence="2"/>
<dbReference type="EMBL" id="AL132654">
    <property type="status" value="NOT_ANNOTATED_CDS"/>
    <property type="molecule type" value="Genomic_DNA"/>
</dbReference>
<dbReference type="EMBL" id="AL031667">
    <property type="status" value="NOT_ANNOTATED_CDS"/>
    <property type="molecule type" value="Genomic_DNA"/>
</dbReference>
<dbReference type="EMBL" id="BC140806">
    <property type="protein sequence ID" value="AAI40807.1"/>
    <property type="molecule type" value="mRNA"/>
</dbReference>
<dbReference type="CCDS" id="CCDS33469.2">
    <molecule id="Q9BQK8-2"/>
</dbReference>
<dbReference type="CCDS" id="CCDS93041.1">
    <molecule id="Q9BQK8-1"/>
</dbReference>
<dbReference type="RefSeq" id="NP_001288789.1">
    <molecule id="Q9BQK8-2"/>
    <property type="nucleotide sequence ID" value="NM_001301860.2"/>
</dbReference>
<dbReference type="RefSeq" id="NP_075047.1">
    <molecule id="Q9BQK8-1"/>
    <property type="nucleotide sequence ID" value="NM_022896.3"/>
</dbReference>
<dbReference type="RefSeq" id="XP_016883509.1">
    <property type="nucleotide sequence ID" value="XM_017028020.1"/>
</dbReference>
<dbReference type="RefSeq" id="XP_047296340.1">
    <molecule id="Q9BQK8-2"/>
    <property type="nucleotide sequence ID" value="XM_047440384.1"/>
</dbReference>
<dbReference type="RefSeq" id="XP_047296341.1">
    <molecule id="Q9BQK8-2"/>
    <property type="nucleotide sequence ID" value="XM_047440385.1"/>
</dbReference>
<dbReference type="RefSeq" id="XP_047296342.1">
    <molecule id="Q9BQK8-1"/>
    <property type="nucleotide sequence ID" value="XM_047440386.1"/>
</dbReference>
<dbReference type="RefSeq" id="XP_047296343.1">
    <molecule id="Q9BQK8-1"/>
    <property type="nucleotide sequence ID" value="XM_047440387.1"/>
</dbReference>
<dbReference type="RefSeq" id="XP_054179846.1">
    <molecule id="Q9BQK8-2"/>
    <property type="nucleotide sequence ID" value="XM_054323871.1"/>
</dbReference>
<dbReference type="RefSeq" id="XP_054179847.1">
    <molecule id="Q9BQK8-2"/>
    <property type="nucleotide sequence ID" value="XM_054323872.1"/>
</dbReference>
<dbReference type="RefSeq" id="XP_054179848.1">
    <molecule id="Q9BQK8-1"/>
    <property type="nucleotide sequence ID" value="XM_054323873.1"/>
</dbReference>
<dbReference type="RefSeq" id="XP_054179849.1">
    <molecule id="Q9BQK8-1"/>
    <property type="nucleotide sequence ID" value="XM_054323874.1"/>
</dbReference>
<dbReference type="SMR" id="Q9BQK8"/>
<dbReference type="BioGRID" id="122340">
    <property type="interactions" value="78"/>
</dbReference>
<dbReference type="FunCoup" id="Q9BQK8">
    <property type="interactions" value="1573"/>
</dbReference>
<dbReference type="IntAct" id="Q9BQK8">
    <property type="interactions" value="28"/>
</dbReference>
<dbReference type="STRING" id="9606.ENSP00000487971"/>
<dbReference type="DEPOD" id="LPIN3"/>
<dbReference type="GlyGen" id="Q9BQK8">
    <property type="glycosylation" value="1 site"/>
</dbReference>
<dbReference type="iPTMnet" id="Q9BQK8"/>
<dbReference type="PhosphoSitePlus" id="Q9BQK8"/>
<dbReference type="BioMuta" id="LPIN3"/>
<dbReference type="DMDM" id="71153524"/>
<dbReference type="jPOST" id="Q9BQK8"/>
<dbReference type="MassIVE" id="Q9BQK8"/>
<dbReference type="PaxDb" id="9606-ENSP00000362354"/>
<dbReference type="PeptideAtlas" id="Q9BQK8"/>
<dbReference type="ProteomicsDB" id="78695">
    <molecule id="Q9BQK8-1"/>
</dbReference>
<dbReference type="ProteomicsDB" id="78696">
    <molecule id="Q9BQK8-2"/>
</dbReference>
<dbReference type="Pumba" id="Q9BQK8"/>
<dbReference type="Antibodypedia" id="27036">
    <property type="antibodies" value="167 antibodies from 25 providers"/>
</dbReference>
<dbReference type="DNASU" id="64900"/>
<dbReference type="Ensembl" id="ENST00000373257.8">
    <molecule id="Q9BQK8-1"/>
    <property type="protein sequence ID" value="ENSP00000362354.3"/>
    <property type="gene ID" value="ENSG00000132793.12"/>
</dbReference>
<dbReference type="Ensembl" id="ENST00000632009.1">
    <molecule id="Q9BQK8-2"/>
    <property type="protein sequence ID" value="ENSP00000487971.1"/>
    <property type="gene ID" value="ENSG00000132793.12"/>
</dbReference>
<dbReference type="GeneID" id="64900"/>
<dbReference type="KEGG" id="hsa:64900"/>
<dbReference type="MANE-Select" id="ENST00000373257.8">
    <property type="protein sequence ID" value="ENSP00000362354.3"/>
    <property type="RefSeq nucleotide sequence ID" value="NM_022896.3"/>
    <property type="RefSeq protein sequence ID" value="NP_075047.1"/>
</dbReference>
<dbReference type="UCSC" id="uc002xjx.3">
    <molecule id="Q9BQK8-1"/>
    <property type="organism name" value="human"/>
</dbReference>
<dbReference type="AGR" id="HGNC:14451"/>
<dbReference type="CTD" id="64900"/>
<dbReference type="DisGeNET" id="64900"/>
<dbReference type="GeneCards" id="LPIN3"/>
<dbReference type="HGNC" id="HGNC:14451">
    <property type="gene designation" value="LPIN3"/>
</dbReference>
<dbReference type="HPA" id="ENSG00000132793">
    <property type="expression patterns" value="Low tissue specificity"/>
</dbReference>
<dbReference type="MIM" id="605520">
    <property type="type" value="gene"/>
</dbReference>
<dbReference type="neXtProt" id="NX_Q9BQK8"/>
<dbReference type="OpenTargets" id="ENSG00000132793"/>
<dbReference type="PharmGKB" id="PA30438"/>
<dbReference type="VEuPathDB" id="HostDB:ENSG00000132793"/>
<dbReference type="eggNOG" id="KOG2116">
    <property type="taxonomic scope" value="Eukaryota"/>
</dbReference>
<dbReference type="GeneTree" id="ENSGT00940000160046"/>
<dbReference type="HOGENOM" id="CLU_002546_0_1_1"/>
<dbReference type="InParanoid" id="Q9BQK8"/>
<dbReference type="OMA" id="GSRWWFS"/>
<dbReference type="OrthoDB" id="4567at2759"/>
<dbReference type="PAN-GO" id="Q9BQK8">
    <property type="GO annotations" value="7 GO annotations based on evolutionary models"/>
</dbReference>
<dbReference type="PhylomeDB" id="Q9BQK8"/>
<dbReference type="TreeFam" id="TF314095"/>
<dbReference type="PathwayCommons" id="Q9BQK8"/>
<dbReference type="Reactome" id="R-HSA-1483191">
    <property type="pathway name" value="Synthesis of PC"/>
</dbReference>
<dbReference type="Reactome" id="R-HSA-1483213">
    <property type="pathway name" value="Synthesis of PE"/>
</dbReference>
<dbReference type="Reactome" id="R-HSA-4419969">
    <property type="pathway name" value="Depolymerization of the Nuclear Lamina"/>
</dbReference>
<dbReference type="Reactome" id="R-HSA-75109">
    <property type="pathway name" value="Triglyceride biosynthesis"/>
</dbReference>
<dbReference type="SignaLink" id="Q9BQK8"/>
<dbReference type="BioGRID-ORCS" id="64900">
    <property type="hits" value="13 hits in 1167 CRISPR screens"/>
</dbReference>
<dbReference type="ChiTaRS" id="LPIN3">
    <property type="organism name" value="human"/>
</dbReference>
<dbReference type="GenomeRNAi" id="64900"/>
<dbReference type="Pharos" id="Q9BQK8">
    <property type="development level" value="Tbio"/>
</dbReference>
<dbReference type="PRO" id="PR:Q9BQK8"/>
<dbReference type="Proteomes" id="UP000005640">
    <property type="component" value="Chromosome 20"/>
</dbReference>
<dbReference type="RNAct" id="Q9BQK8">
    <property type="molecule type" value="protein"/>
</dbReference>
<dbReference type="Bgee" id="ENSG00000132793">
    <property type="expression patterns" value="Expressed in lower esophagus mucosa and 93 other cell types or tissues"/>
</dbReference>
<dbReference type="ExpressionAtlas" id="Q9BQK8">
    <property type="expression patterns" value="baseline and differential"/>
</dbReference>
<dbReference type="GO" id="GO:0005789">
    <property type="term" value="C:endoplasmic reticulum membrane"/>
    <property type="evidence" value="ECO:0000304"/>
    <property type="project" value="Reactome"/>
</dbReference>
<dbReference type="GO" id="GO:0005634">
    <property type="term" value="C:nucleus"/>
    <property type="evidence" value="ECO:0000318"/>
    <property type="project" value="GO_Central"/>
</dbReference>
<dbReference type="GO" id="GO:0008195">
    <property type="term" value="F:phosphatidate phosphatase activity"/>
    <property type="evidence" value="ECO:0000318"/>
    <property type="project" value="GO_Central"/>
</dbReference>
<dbReference type="GO" id="GO:0003713">
    <property type="term" value="F:transcription coactivator activity"/>
    <property type="evidence" value="ECO:0000318"/>
    <property type="project" value="GO_Central"/>
</dbReference>
<dbReference type="GO" id="GO:0032869">
    <property type="term" value="P:cellular response to insulin stimulus"/>
    <property type="evidence" value="ECO:0000318"/>
    <property type="project" value="GO_Central"/>
</dbReference>
<dbReference type="GO" id="GO:0009062">
    <property type="term" value="P:fatty acid catabolic process"/>
    <property type="evidence" value="ECO:0000318"/>
    <property type="project" value="GO_Central"/>
</dbReference>
<dbReference type="GO" id="GO:0045944">
    <property type="term" value="P:positive regulation of transcription by RNA polymerase II"/>
    <property type="evidence" value="ECO:0000318"/>
    <property type="project" value="GO_Central"/>
</dbReference>
<dbReference type="GO" id="GO:0019432">
    <property type="term" value="P:triglyceride biosynthetic process"/>
    <property type="evidence" value="ECO:0000318"/>
    <property type="project" value="GO_Central"/>
</dbReference>
<dbReference type="InterPro" id="IPR036412">
    <property type="entry name" value="HAD-like_sf"/>
</dbReference>
<dbReference type="InterPro" id="IPR026058">
    <property type="entry name" value="LIPIN"/>
</dbReference>
<dbReference type="InterPro" id="IPR031703">
    <property type="entry name" value="Lipin_mid"/>
</dbReference>
<dbReference type="InterPro" id="IPR007651">
    <property type="entry name" value="Lipin_N"/>
</dbReference>
<dbReference type="InterPro" id="IPR013209">
    <property type="entry name" value="LNS2"/>
</dbReference>
<dbReference type="InterPro" id="IPR031315">
    <property type="entry name" value="LNS2/PITP"/>
</dbReference>
<dbReference type="PANTHER" id="PTHR12181">
    <property type="entry name" value="LIPIN"/>
    <property type="match status" value="1"/>
</dbReference>
<dbReference type="PANTHER" id="PTHR12181:SF62">
    <property type="entry name" value="PHOSPHATIDATE PHOSPHATASE LPIN3"/>
    <property type="match status" value="1"/>
</dbReference>
<dbReference type="Pfam" id="PF16876">
    <property type="entry name" value="Lipin_mid"/>
    <property type="match status" value="1"/>
</dbReference>
<dbReference type="Pfam" id="PF04571">
    <property type="entry name" value="Lipin_N"/>
    <property type="match status" value="1"/>
</dbReference>
<dbReference type="Pfam" id="PF08235">
    <property type="entry name" value="LNS2"/>
    <property type="match status" value="1"/>
</dbReference>
<dbReference type="SMART" id="SM00775">
    <property type="entry name" value="LNS2"/>
    <property type="match status" value="1"/>
</dbReference>
<dbReference type="SUPFAM" id="SSF56784">
    <property type="entry name" value="HAD-like"/>
    <property type="match status" value="1"/>
</dbReference>
<sequence length="851" mass="93614">MNYVGQLAETVFGTVKELYRGLNPATLSGGIDVLVVKQVDGSFRCSPFHVRFGKLGVLRSREKVVDIELNGEPVDLHMKLGDSGEAFFVQELESDDEHVPPGLCTSPIPWGGLSGFPSDSQLGTASEPEGLVMAGTASTGRRKRRRRRKPKQKEDAVATDSSPEELEAGAESELSLPEKLRPEPPGVQLEEKSSLQPKDIYPYSDGEWPPQASLSAGELTSPKSDSELEVRTPEPSPLRAESHMQWAWGRLPKVARAERPESSVVLEGRAGATSPPRGGPSTPSTSVAGGVDPLGLPIQQTEAGADLQPDTEDPTLVGPPLHTPETEESKTQSSGDMGLPPASKSWSWATLEVPVPTGQPERVSRGKGSPKRSQHLGPSDIYLDDLPSLDSENAALYFPQSDSGLGARRWSEPSSQKSLRDPNPEHEPEPTLDTVDTIALSLCGGLADSRDISLEKFNQHSVSYQDLTKNPGLLDDPNLVVKINGKHYNWAVAAPMILSLQAFQKNLPKSTMDKLEREKMPRKGGRWWFSWRRRDFLAEERSAQKEKTAAKEQQGEKTEVLSSDDDAPDSPVILEIPSLPPSTPPSTPTYKKSLRLSSDQIRRLNLQEGANDVVFSVTTQYQGTCRCKATIYLWKWDDKVVISDIDGTITKSDALGHILPQLGKDWTHQGITSLYHKIQLNGYKFLYCSARAIGMADLTKGYLQWVSEGGCSLPKGPILLSPSSLFSALHREVIEKKPEVFKVACLSDIQQLFLPHGQPFYAAFGNRPNDVFAYRQVGLPESRIFTVNPRGELIQELIKNHKSTYERLGEVVELLFPPVARGPSTDLANPEYSNFCYWREPLPAVDLDTLD</sequence>
<gene>
    <name evidence="8" type="primary">LPIN3</name>
    <name type="synonym">LIPN3L</name>
</gene>
<feature type="chain" id="PRO_0000209883" description="Phosphatidate phosphatase LPIN3">
    <location>
        <begin position="1"/>
        <end position="851"/>
    </location>
</feature>
<feature type="region of interest" description="N-LIP">
    <location>
        <begin position="1"/>
        <end position="108"/>
    </location>
</feature>
<feature type="region of interest" description="Disordered" evidence="4">
    <location>
        <begin position="114"/>
        <end position="385"/>
    </location>
</feature>
<feature type="region of interest" description="Disordered" evidence="4">
    <location>
        <begin position="400"/>
        <end position="432"/>
    </location>
</feature>
<feature type="region of interest" description="Disordered" evidence="4">
    <location>
        <begin position="542"/>
        <end position="591"/>
    </location>
</feature>
<feature type="region of interest" description="C-LIP">
    <location>
        <begin position="590"/>
        <end position="792"/>
    </location>
</feature>
<feature type="short sequence motif" description="Nuclear localization signal" evidence="3">
    <location>
        <begin position="141"/>
        <end position="148"/>
    </location>
</feature>
<feature type="short sequence motif" description="DXDXT motif">
    <location>
        <begin position="644"/>
        <end position="648"/>
    </location>
</feature>
<feature type="short sequence motif" description="LXXIL motif">
    <location>
        <begin position="655"/>
        <end position="659"/>
    </location>
</feature>
<feature type="compositionally biased region" description="Basic residues" evidence="4">
    <location>
        <begin position="140"/>
        <end position="151"/>
    </location>
</feature>
<feature type="compositionally biased region" description="Low complexity" evidence="4">
    <location>
        <begin position="268"/>
        <end position="286"/>
    </location>
</feature>
<feature type="compositionally biased region" description="Basic and acidic residues" evidence="4">
    <location>
        <begin position="418"/>
        <end position="429"/>
    </location>
</feature>
<feature type="compositionally biased region" description="Basic and acidic residues" evidence="4">
    <location>
        <begin position="542"/>
        <end position="559"/>
    </location>
</feature>
<feature type="compositionally biased region" description="Pro residues" evidence="4">
    <location>
        <begin position="578"/>
        <end position="587"/>
    </location>
</feature>
<feature type="modified residue" description="Phosphothreonine" evidence="9">
    <location>
        <position position="159"/>
    </location>
</feature>
<feature type="modified residue" description="Phosphoserine" evidence="9">
    <location>
        <position position="161"/>
    </location>
</feature>
<feature type="modified residue" description="Phosphoserine" evidence="9">
    <location>
        <position position="162"/>
    </location>
</feature>
<feature type="modified residue" description="Phosphoserine" evidence="2">
    <location>
        <position position="224"/>
    </location>
</feature>
<feature type="modified residue" description="Phosphoserine" evidence="10">
    <location>
        <position position="463"/>
    </location>
</feature>
<feature type="splice variant" id="VSP_036885" description="In isoform 2." evidence="6">
    <original>G</original>
    <variation>GS</variation>
    <location>
        <position position="186"/>
    </location>
</feature>
<feature type="sequence variant" id="VAR_053489" description="In dbSNP:rs12625565.">
    <original>Q</original>
    <variation>H</variation>
    <location>
        <position position="679"/>
    </location>
</feature>
<accession>Q9BQK8</accession>
<accession>B2RTT5</accession>
<accession>Q5TDB9</accession>
<accession>Q9NPY8</accession>
<accession>Q9UJE5</accession>
<keyword id="KW-0025">Alternative splicing</keyword>
<keyword id="KW-0276">Fatty acid metabolism</keyword>
<keyword id="KW-0378">Hydrolase</keyword>
<keyword id="KW-0443">Lipid metabolism</keyword>
<keyword id="KW-0539">Nucleus</keyword>
<keyword id="KW-0597">Phosphoprotein</keyword>
<keyword id="KW-1267">Proteomics identification</keyword>
<keyword id="KW-1185">Reference proteome</keyword>
<comment type="function">
    <text evidence="2">Magnesium-dependent phosphatidate phosphatase enzyme which catalyzes the conversion of phosphatidic acid to diacylglycerol during triglyceride, phosphatidylcholine and phosphatidylethanolamine biosynthesis therefore regulates fatty acid metabolism.</text>
</comment>
<comment type="catalytic activity">
    <reaction evidence="2">
        <text>a 1,2-diacyl-sn-glycero-3-phosphate + H2O = a 1,2-diacyl-sn-glycerol + phosphate</text>
        <dbReference type="Rhea" id="RHEA:27429"/>
        <dbReference type="ChEBI" id="CHEBI:15377"/>
        <dbReference type="ChEBI" id="CHEBI:17815"/>
        <dbReference type="ChEBI" id="CHEBI:43474"/>
        <dbReference type="ChEBI" id="CHEBI:58608"/>
        <dbReference type="EC" id="3.1.3.4"/>
    </reaction>
    <physiologicalReaction direction="left-to-right" evidence="2">
        <dbReference type="Rhea" id="RHEA:27430"/>
    </physiologicalReaction>
</comment>
<comment type="cofactor">
    <cofactor evidence="1">
        <name>Mg(2+)</name>
        <dbReference type="ChEBI" id="CHEBI:18420"/>
    </cofactor>
</comment>
<comment type="activity regulation">
    <text evidence="1">Inhibited by N-ethylmaleimide.</text>
</comment>
<comment type="subcellular location">
    <subcellularLocation>
        <location evidence="7">Nucleus</location>
    </subcellularLocation>
</comment>
<comment type="alternative products">
    <event type="alternative splicing"/>
    <isoform>
        <id>Q9BQK8-1</id>
        <name>1</name>
        <sequence type="displayed"/>
    </isoform>
    <isoform>
        <id>Q9BQK8-2</id>
        <name>2</name>
        <sequence type="described" ref="VSP_036885"/>
    </isoform>
</comment>
<comment type="tissue specificity">
    <text evidence="5">Significant expression in intestine and other regions of the gastrointestinal tract.</text>
</comment>
<comment type="domain">
    <text evidence="1">Contains 1 Asp-Xaa-Asp-Xaa-Thr (DXDXT) motif, a catalytic motif known to be essential for phosphatidate phosphatase activity.</text>
</comment>
<comment type="domain">
    <text evidence="1">Contains one Leu-Xaa-Xaa-Ile-Leu (LXXIL) motif, a motif known to be a transcriptional binding motif.</text>
</comment>
<comment type="similarity">
    <text evidence="7">Belongs to the lipin family.</text>
</comment>
<protein>
    <recommendedName>
        <fullName evidence="7">Phosphatidate phosphatase LPIN3</fullName>
        <ecNumber evidence="2">3.1.3.4</ecNumber>
    </recommendedName>
    <alternativeName>
        <fullName>Lipin-3</fullName>
    </alternativeName>
    <alternativeName>
        <fullName>Lipin-3-like</fullName>
    </alternativeName>
</protein>